<comment type="subcellular location">
    <subcellularLocation>
        <location evidence="1">Cytoplasm</location>
    </subcellularLocation>
</comment>
<comment type="similarity">
    <text evidence="1">Belongs to the TACO1 family.</text>
</comment>
<dbReference type="EMBL" id="AE014184">
    <property type="protein sequence ID" value="AAO44363.1"/>
    <property type="molecule type" value="Genomic_DNA"/>
</dbReference>
<dbReference type="RefSeq" id="WP_011096451.1">
    <property type="nucleotide sequence ID" value="NC_004572.3"/>
</dbReference>
<dbReference type="SMR" id="P67191"/>
<dbReference type="STRING" id="203267.TWT_266"/>
<dbReference type="KEGG" id="twh:TWT_266"/>
<dbReference type="eggNOG" id="COG0217">
    <property type="taxonomic scope" value="Bacteria"/>
</dbReference>
<dbReference type="HOGENOM" id="CLU_062974_2_2_11"/>
<dbReference type="OrthoDB" id="9781053at2"/>
<dbReference type="Proteomes" id="UP000002200">
    <property type="component" value="Chromosome"/>
</dbReference>
<dbReference type="GO" id="GO:0005829">
    <property type="term" value="C:cytosol"/>
    <property type="evidence" value="ECO:0007669"/>
    <property type="project" value="TreeGrafter"/>
</dbReference>
<dbReference type="GO" id="GO:0003677">
    <property type="term" value="F:DNA binding"/>
    <property type="evidence" value="ECO:0007669"/>
    <property type="project" value="UniProtKB-UniRule"/>
</dbReference>
<dbReference type="GO" id="GO:0006355">
    <property type="term" value="P:regulation of DNA-templated transcription"/>
    <property type="evidence" value="ECO:0007669"/>
    <property type="project" value="UniProtKB-UniRule"/>
</dbReference>
<dbReference type="FunFam" id="1.10.10.200:FF:000002">
    <property type="entry name" value="Probable transcriptional regulatory protein CLM62_37755"/>
    <property type="match status" value="1"/>
</dbReference>
<dbReference type="Gene3D" id="1.10.10.200">
    <property type="match status" value="1"/>
</dbReference>
<dbReference type="Gene3D" id="3.30.70.980">
    <property type="match status" value="2"/>
</dbReference>
<dbReference type="HAMAP" id="MF_00693">
    <property type="entry name" value="Transcrip_reg_TACO1"/>
    <property type="match status" value="1"/>
</dbReference>
<dbReference type="InterPro" id="IPR017856">
    <property type="entry name" value="Integrase-like_N"/>
</dbReference>
<dbReference type="InterPro" id="IPR048300">
    <property type="entry name" value="TACO1_YebC-like_2nd/3rd_dom"/>
</dbReference>
<dbReference type="InterPro" id="IPR049083">
    <property type="entry name" value="TACO1_YebC_N"/>
</dbReference>
<dbReference type="InterPro" id="IPR002876">
    <property type="entry name" value="Transcrip_reg_TACO1-like"/>
</dbReference>
<dbReference type="InterPro" id="IPR026564">
    <property type="entry name" value="Transcrip_reg_TACO1-like_dom3"/>
</dbReference>
<dbReference type="InterPro" id="IPR029072">
    <property type="entry name" value="YebC-like"/>
</dbReference>
<dbReference type="NCBIfam" id="NF001030">
    <property type="entry name" value="PRK00110.1"/>
    <property type="match status" value="1"/>
</dbReference>
<dbReference type="NCBIfam" id="NF009044">
    <property type="entry name" value="PRK12378.1"/>
    <property type="match status" value="1"/>
</dbReference>
<dbReference type="NCBIfam" id="TIGR01033">
    <property type="entry name" value="YebC/PmpR family DNA-binding transcriptional regulator"/>
    <property type="match status" value="1"/>
</dbReference>
<dbReference type="PANTHER" id="PTHR12532:SF6">
    <property type="entry name" value="TRANSCRIPTIONAL REGULATORY PROTEIN YEBC-RELATED"/>
    <property type="match status" value="1"/>
</dbReference>
<dbReference type="PANTHER" id="PTHR12532">
    <property type="entry name" value="TRANSLATIONAL ACTIVATOR OF CYTOCHROME C OXIDASE 1"/>
    <property type="match status" value="1"/>
</dbReference>
<dbReference type="Pfam" id="PF20772">
    <property type="entry name" value="TACO1_YebC_N"/>
    <property type="match status" value="1"/>
</dbReference>
<dbReference type="Pfam" id="PF01709">
    <property type="entry name" value="Transcrip_reg"/>
    <property type="match status" value="1"/>
</dbReference>
<dbReference type="SUPFAM" id="SSF75625">
    <property type="entry name" value="YebC-like"/>
    <property type="match status" value="1"/>
</dbReference>
<sequence>MSGHSKWATIKRKKAVNDAQRSKNFAKLIRLIEVAAKQGGPDLAGNPGLAEAVQKAKKNSVPNDNIDRAIKRGSGLTGEHINYVSLVYEVKAFDGVALLVECLTDNKNRCAAGIRSIVTRSGCSMVNPGSLAYNFKRKGIVVLQDRDANGNLLSEDLVLSAVLEAEVDDIVPTGDCGFEIIAEPSNLSAVCNALRDSGIQYRSVETVYVPNSTVSLPEQKYDRIIRMIEALEESDDVQGVYTNLSGKDLACE</sequence>
<protein>
    <recommendedName>
        <fullName evidence="1">Probable transcriptional regulatory protein TWT_266</fullName>
    </recommendedName>
</protein>
<feature type="chain" id="PRO_0000175923" description="Probable transcriptional regulatory protein TWT_266">
    <location>
        <begin position="1"/>
        <end position="252"/>
    </location>
</feature>
<gene>
    <name type="ordered locus">TWT_266</name>
</gene>
<keyword id="KW-0963">Cytoplasm</keyword>
<keyword id="KW-0238">DNA-binding</keyword>
<keyword id="KW-1185">Reference proteome</keyword>
<keyword id="KW-0804">Transcription</keyword>
<keyword id="KW-0805">Transcription regulation</keyword>
<reference key="1">
    <citation type="journal article" date="2003" name="Genome Res.">
        <title>Tropheryma whipplei twist: a human pathogenic Actinobacteria with a reduced genome.</title>
        <authorList>
            <person name="Raoult D."/>
            <person name="Ogata H."/>
            <person name="Audic S."/>
            <person name="Robert C."/>
            <person name="Suhre K."/>
            <person name="Drancourt M."/>
            <person name="Claverie J.-M."/>
        </authorList>
    </citation>
    <scope>NUCLEOTIDE SEQUENCE [LARGE SCALE GENOMIC DNA]</scope>
    <source>
        <strain>Twist</strain>
    </source>
</reference>
<evidence type="ECO:0000255" key="1">
    <source>
        <dbReference type="HAMAP-Rule" id="MF_00693"/>
    </source>
</evidence>
<name>Y266_TROWT</name>
<proteinExistence type="inferred from homology"/>
<organism>
    <name type="scientific">Tropheryma whipplei (strain Twist)</name>
    <name type="common">Whipple's bacillus</name>
    <dbReference type="NCBI Taxonomy" id="203267"/>
    <lineage>
        <taxon>Bacteria</taxon>
        <taxon>Bacillati</taxon>
        <taxon>Actinomycetota</taxon>
        <taxon>Actinomycetes</taxon>
        <taxon>Micrococcales</taxon>
        <taxon>Tropherymataceae</taxon>
        <taxon>Tropheryma</taxon>
    </lineage>
</organism>
<accession>P67191</accession>
<accession>Q83GK2</accession>
<accession>Q83HM7</accession>